<dbReference type="EMBL" id="S74155">
    <property type="protein sequence ID" value="AAB32276.1"/>
    <property type="molecule type" value="mRNA"/>
</dbReference>
<dbReference type="EMBL" id="L03398">
    <property type="protein sequence ID" value="AAA50049.1"/>
    <property type="molecule type" value="mRNA"/>
</dbReference>
<dbReference type="EMBL" id="BC092692">
    <property type="protein sequence ID" value="AAH92692.1"/>
    <property type="molecule type" value="mRNA"/>
</dbReference>
<dbReference type="PIR" id="I51256">
    <property type="entry name" value="I51256"/>
</dbReference>
<dbReference type="RefSeq" id="NP_571481.2">
    <property type="nucleotide sequence ID" value="NM_131406.2"/>
</dbReference>
<dbReference type="SMR" id="Q90271"/>
<dbReference type="FunCoup" id="Q90271">
    <property type="interactions" value="1340"/>
</dbReference>
<dbReference type="STRING" id="7955.ENSDARP00000073792"/>
<dbReference type="PaxDb" id="7955-ENSDARP00000073792"/>
<dbReference type="Ensembl" id="ENSDART00000079336">
    <property type="protein sequence ID" value="ENSDARP00000073792"/>
    <property type="gene ID" value="ENSDARG00000056783"/>
</dbReference>
<dbReference type="GeneID" id="30680"/>
<dbReference type="KEGG" id="dre:30680"/>
<dbReference type="AGR" id="ZFIN:ZDB-GENE-980526-284"/>
<dbReference type="CTD" id="30680"/>
<dbReference type="ZFIN" id="ZDB-GENE-980526-284">
    <property type="gene designation" value="raraa"/>
</dbReference>
<dbReference type="eggNOG" id="KOG3575">
    <property type="taxonomic scope" value="Eukaryota"/>
</dbReference>
<dbReference type="InParanoid" id="Q90271"/>
<dbReference type="OrthoDB" id="6081310at2759"/>
<dbReference type="PhylomeDB" id="Q90271"/>
<dbReference type="TreeFam" id="TF328382"/>
<dbReference type="Reactome" id="R-DRE-4090294">
    <property type="pathway name" value="SUMOylation of intracellular receptors"/>
</dbReference>
<dbReference type="Reactome" id="R-DRE-5362517">
    <property type="pathway name" value="Signaling by Retinoic Acid"/>
</dbReference>
<dbReference type="Reactome" id="R-DRE-9616222">
    <property type="pathway name" value="Transcriptional regulation of granulopoiesis"/>
</dbReference>
<dbReference type="SignaLink" id="Q90271"/>
<dbReference type="PRO" id="PR:Q90271"/>
<dbReference type="Proteomes" id="UP000000437">
    <property type="component" value="Chromosome 12"/>
</dbReference>
<dbReference type="Bgee" id="ENSDARG00000056783">
    <property type="expression patterns" value="Expressed in retinal neural layer and 55 other cell types or tissues"/>
</dbReference>
<dbReference type="ExpressionAtlas" id="Q90271">
    <property type="expression patterns" value="baseline and differential"/>
</dbReference>
<dbReference type="GO" id="GO:0005634">
    <property type="term" value="C:nucleus"/>
    <property type="evidence" value="ECO:0000318"/>
    <property type="project" value="GO_Central"/>
</dbReference>
<dbReference type="GO" id="GO:0004879">
    <property type="term" value="F:nuclear receptor activity"/>
    <property type="evidence" value="ECO:0000314"/>
    <property type="project" value="UniProtKB"/>
</dbReference>
<dbReference type="GO" id="GO:0000978">
    <property type="term" value="F:RNA polymerase II cis-regulatory region sequence-specific DNA binding"/>
    <property type="evidence" value="ECO:0000318"/>
    <property type="project" value="GO_Central"/>
</dbReference>
<dbReference type="GO" id="GO:0008270">
    <property type="term" value="F:zinc ion binding"/>
    <property type="evidence" value="ECO:0007669"/>
    <property type="project" value="UniProtKB-KW"/>
</dbReference>
<dbReference type="GO" id="GO:0030154">
    <property type="term" value="P:cell differentiation"/>
    <property type="evidence" value="ECO:0000318"/>
    <property type="project" value="GO_Central"/>
</dbReference>
<dbReference type="GO" id="GO:0021575">
    <property type="term" value="P:hindbrain morphogenesis"/>
    <property type="evidence" value="ECO:0000314"/>
    <property type="project" value="UniProtKB"/>
</dbReference>
<dbReference type="GO" id="GO:0001889">
    <property type="term" value="P:liver development"/>
    <property type="evidence" value="ECO:0000315"/>
    <property type="project" value="ZFIN"/>
</dbReference>
<dbReference type="GO" id="GO:0000122">
    <property type="term" value="P:negative regulation of transcription by RNA polymerase II"/>
    <property type="evidence" value="ECO:0000318"/>
    <property type="project" value="GO_Central"/>
</dbReference>
<dbReference type="GO" id="GO:0045944">
    <property type="term" value="P:positive regulation of transcription by RNA polymerase II"/>
    <property type="evidence" value="ECO:0000318"/>
    <property type="project" value="GO_Central"/>
</dbReference>
<dbReference type="GO" id="GO:0032526">
    <property type="term" value="P:response to retinoic acid"/>
    <property type="evidence" value="ECO:0000314"/>
    <property type="project" value="UniProtKB"/>
</dbReference>
<dbReference type="GO" id="GO:0048384">
    <property type="term" value="P:retinoic acid receptor signaling pathway"/>
    <property type="evidence" value="ECO:0000318"/>
    <property type="project" value="GO_Central"/>
</dbReference>
<dbReference type="CDD" id="cd06964">
    <property type="entry name" value="NR_DBD_RAR"/>
    <property type="match status" value="1"/>
</dbReference>
<dbReference type="CDD" id="cd06937">
    <property type="entry name" value="NR_LBD_RAR"/>
    <property type="match status" value="1"/>
</dbReference>
<dbReference type="FunFam" id="1.10.565.10:FF:000001">
    <property type="entry name" value="Retinoic acid receptor beta isoform"/>
    <property type="match status" value="1"/>
</dbReference>
<dbReference type="FunFam" id="3.30.50.10:FF:000004">
    <property type="entry name" value="Retinoic acid receptor beta isoform"/>
    <property type="match status" value="1"/>
</dbReference>
<dbReference type="Gene3D" id="3.30.50.10">
    <property type="entry name" value="Erythroid Transcription Factor GATA-1, subunit A"/>
    <property type="match status" value="1"/>
</dbReference>
<dbReference type="Gene3D" id="1.10.565.10">
    <property type="entry name" value="Retinoid X Receptor"/>
    <property type="match status" value="1"/>
</dbReference>
<dbReference type="InterPro" id="IPR035500">
    <property type="entry name" value="NHR-like_dom_sf"/>
</dbReference>
<dbReference type="InterPro" id="IPR047159">
    <property type="entry name" value="NR_DBD_RAR"/>
</dbReference>
<dbReference type="InterPro" id="IPR047158">
    <property type="entry name" value="NR_LBD_RAR"/>
</dbReference>
<dbReference type="InterPro" id="IPR000536">
    <property type="entry name" value="Nucl_hrmn_rcpt_lig-bd"/>
</dbReference>
<dbReference type="InterPro" id="IPR001723">
    <property type="entry name" value="Nuclear_hrmn_rcpt"/>
</dbReference>
<dbReference type="InterPro" id="IPR003078">
    <property type="entry name" value="Retinoic_acid_rcpt"/>
</dbReference>
<dbReference type="InterPro" id="IPR001628">
    <property type="entry name" value="Znf_hrmn_rcpt"/>
</dbReference>
<dbReference type="InterPro" id="IPR013088">
    <property type="entry name" value="Znf_NHR/GATA"/>
</dbReference>
<dbReference type="PANTHER" id="PTHR24085">
    <property type="entry name" value="NUCLEAR HORMONE RECEPTOR"/>
    <property type="match status" value="1"/>
</dbReference>
<dbReference type="PANTHER" id="PTHR24085:SF8">
    <property type="entry name" value="RETINOIC ACID RECEPTOR ALPHA"/>
    <property type="match status" value="1"/>
</dbReference>
<dbReference type="Pfam" id="PF00104">
    <property type="entry name" value="Hormone_recep"/>
    <property type="match status" value="1"/>
</dbReference>
<dbReference type="Pfam" id="PF00105">
    <property type="entry name" value="zf-C4"/>
    <property type="match status" value="1"/>
</dbReference>
<dbReference type="PRINTS" id="PR01292">
    <property type="entry name" value="RETNOICACIDR"/>
</dbReference>
<dbReference type="PRINTS" id="PR00398">
    <property type="entry name" value="STRDHORMONER"/>
</dbReference>
<dbReference type="PRINTS" id="PR00047">
    <property type="entry name" value="STROIDFINGER"/>
</dbReference>
<dbReference type="SMART" id="SM00430">
    <property type="entry name" value="HOLI"/>
    <property type="match status" value="1"/>
</dbReference>
<dbReference type="SMART" id="SM00399">
    <property type="entry name" value="ZnF_C4"/>
    <property type="match status" value="1"/>
</dbReference>
<dbReference type="SUPFAM" id="SSF57716">
    <property type="entry name" value="Glucocorticoid receptor-like (DNA-binding domain)"/>
    <property type="match status" value="1"/>
</dbReference>
<dbReference type="SUPFAM" id="SSF48508">
    <property type="entry name" value="Nuclear receptor ligand-binding domain"/>
    <property type="match status" value="1"/>
</dbReference>
<dbReference type="PROSITE" id="PS51843">
    <property type="entry name" value="NR_LBD"/>
    <property type="match status" value="1"/>
</dbReference>
<dbReference type="PROSITE" id="PS00031">
    <property type="entry name" value="NUCLEAR_REC_DBD_1"/>
    <property type="match status" value="1"/>
</dbReference>
<dbReference type="PROSITE" id="PS51030">
    <property type="entry name" value="NUCLEAR_REC_DBD_2"/>
    <property type="match status" value="1"/>
</dbReference>
<name>RARAA_DANRE</name>
<gene>
    <name evidence="14" type="primary">raraa</name>
    <name type="synonym">nr1b1a</name>
    <name evidence="14" type="synonym">rara2a</name>
    <name type="ORF">zgc:109797</name>
</gene>
<accession>Q90271</accession>
<accession>Q91391</accession>
<reference evidence="10 12" key="1">
    <citation type="journal article" date="1994" name="Mech. Dev.">
        <title>Effects of retinoic acid on the expression of retinoic acid receptors during zebrafish embryogenesis.</title>
        <authorList>
            <person name="Joore J."/>
            <person name="van der Lans G.B.L.J."/>
            <person name="Lanser P.H."/>
            <person name="Vervaart J.M.A."/>
            <person name="Zivkovic D."/>
            <person name="Speksnijder J.E."/>
            <person name="Kruijer W."/>
        </authorList>
    </citation>
    <scope>NUCLEOTIDE SEQUENCE [MRNA]</scope>
    <scope>TISSUE SPECIFICITY</scope>
    <scope>DEVELOPMENTAL STAGE</scope>
    <scope>INDUCTION</scope>
    <source>
        <tissue evidence="9">Embryo</tissue>
    </source>
</reference>
<reference evidence="10 11" key="2">
    <citation type="submission" date="1992-12" db="EMBL/GenBank/DDBJ databases">
        <title>The molecular characterization of three zebrafish retinoic acid receptor genes suggests the retinoic acid pathway functions in embryonic hindbrain development.</title>
        <authorList>
            <person name="Stachel S.E."/>
            <person name="Kushner P."/>
        </authorList>
    </citation>
    <scope>NUCLEOTIDE SEQUENCE [MRNA]</scope>
    <source>
        <tissue evidence="11">Gastrula</tissue>
    </source>
</reference>
<reference evidence="10 11" key="3">
    <citation type="submission" date="2005-04" db="EMBL/GenBank/DDBJ databases">
        <authorList>
            <consortium name="NIH - Zebrafish Gene Collection (ZGC) project"/>
        </authorList>
    </citation>
    <scope>NUCLEOTIDE SEQUENCE [LARGE SCALE MRNA]</scope>
    <source>
        <tissue evidence="13">Brain</tissue>
    </source>
</reference>
<reference evidence="10" key="4">
    <citation type="journal article" date="2006" name="Gene Expr. Patterns">
        <title>Characterization of the retinoic acid receptor genes raraa, rarab and rarg during zebrafish development.</title>
        <authorList>
            <person name="Hale L.A."/>
            <person name="Tallafuss A."/>
            <person name="Yan Y.-L."/>
            <person name="Dudley L."/>
            <person name="Eisen J.S."/>
            <person name="Postlethwait J.H."/>
        </authorList>
    </citation>
    <scope>DEVELOPMENTAL STAGE</scope>
    <scope>TISSUE SPECIFICITY</scope>
</reference>
<reference key="5">
    <citation type="journal article" date="2009" name="Dev. Biol.">
        <title>Combinatorial roles for zebrafish retinoic acid receptors in the hindbrain, limbs and pharyngeal arches.</title>
        <authorList>
            <person name="Linville A."/>
            <person name="Radtke K."/>
            <person name="Waxman J.S."/>
            <person name="Yelon D."/>
            <person name="Schilling T.F."/>
        </authorList>
    </citation>
    <scope>DEVELOPMENTAL STAGE</scope>
    <scope>INDUCTION</scope>
    <scope>FUNCTION</scope>
</reference>
<evidence type="ECO:0000250" key="1"/>
<evidence type="ECO:0000250" key="2">
    <source>
        <dbReference type="UniProtKB" id="P10276"/>
    </source>
</evidence>
<evidence type="ECO:0000255" key="3"/>
<evidence type="ECO:0000255" key="4">
    <source>
        <dbReference type="PROSITE-ProRule" id="PRU00407"/>
    </source>
</evidence>
<evidence type="ECO:0000255" key="5">
    <source>
        <dbReference type="PROSITE-ProRule" id="PRU01189"/>
    </source>
</evidence>
<evidence type="ECO:0000256" key="6">
    <source>
        <dbReference type="SAM" id="MobiDB-lite"/>
    </source>
</evidence>
<evidence type="ECO:0000269" key="7">
    <source>
    </source>
</evidence>
<evidence type="ECO:0000269" key="8">
    <source>
    </source>
</evidence>
<evidence type="ECO:0000269" key="9">
    <source>
    </source>
</evidence>
<evidence type="ECO:0000305" key="10"/>
<evidence type="ECO:0000312" key="11">
    <source>
        <dbReference type="EMBL" id="AAA50049.1"/>
    </source>
</evidence>
<evidence type="ECO:0000312" key="12">
    <source>
        <dbReference type="EMBL" id="AAB32276.1"/>
    </source>
</evidence>
<evidence type="ECO:0000312" key="13">
    <source>
        <dbReference type="EMBL" id="AAH92692.1"/>
    </source>
</evidence>
<evidence type="ECO:0000312" key="14">
    <source>
        <dbReference type="ZFIN" id="ZDB-GENE-980526-284"/>
    </source>
</evidence>
<sequence>MYESVDVNPFLMMDYYNQSRGCLIPDKMPHPFSSSIRHQHWSGSNHSIETQSTSSEEIVPSPPSPPPPPRIYKPCFVCQDKSSGYHYGVSACEGCKGFFRRSIQKNMVYTCHREKNCIINKVTRNRCQYCRLQKCLEVGMSKESVRNDRNKKKKEEKKPECTENYTLSPDTEQMIDRVRKAHQETFPSLCQLGKYTTSNSSERRVALDVDLWDKFSELSTKCIIKTVEFAKQLPGFTTLTIADQITLLKAACLDILILRICTRYTPEQDTMTFSDGLTLNRTQMHNAGFGPLTDLVFAFANQLLPLEMDDAETGLLSAICLLCGDRQDLEQADKVDVLQEPLLEALKIYVRNRRPHKPHMFPKMLMKITDLRSISAKGAERVITLKMEIPGSMPPLIQEMLENSEGLESSSGAQGSRASATTPGSCSPSLSPNSAQSSPPTQSP</sequence>
<proteinExistence type="evidence at transcript level"/>
<feature type="chain" id="PRO_0000262962" description="Retinoic acid receptor alpha-A">
    <location>
        <begin position="1"/>
        <end position="444"/>
    </location>
</feature>
<feature type="domain" description="NR LBD" evidence="5">
    <location>
        <begin position="170"/>
        <end position="404"/>
    </location>
</feature>
<feature type="DNA-binding region" description="Nuclear receptor" evidence="4">
    <location>
        <begin position="72"/>
        <end position="147"/>
    </location>
</feature>
<feature type="zinc finger region" description="NR C4-type" evidence="4">
    <location>
        <begin position="75"/>
        <end position="95"/>
    </location>
</feature>
<feature type="zinc finger region" description="NR C4-type" evidence="4">
    <location>
        <begin position="111"/>
        <end position="130"/>
    </location>
</feature>
<feature type="region of interest" description="Modulating" evidence="3">
    <location>
        <begin position="1"/>
        <end position="71"/>
    </location>
</feature>
<feature type="region of interest" description="Disordered" evidence="6">
    <location>
        <begin position="35"/>
        <end position="67"/>
    </location>
</feature>
<feature type="region of interest" description="Hinge" evidence="3">
    <location>
        <begin position="148"/>
        <end position="169"/>
    </location>
</feature>
<feature type="region of interest" description="Disordered" evidence="6">
    <location>
        <begin position="402"/>
        <end position="444"/>
    </location>
</feature>
<feature type="short sequence motif" description="9aaTAD" evidence="2">
    <location>
        <begin position="395"/>
        <end position="403"/>
    </location>
</feature>
<feature type="compositionally biased region" description="Polar residues" evidence="6">
    <location>
        <begin position="35"/>
        <end position="46"/>
    </location>
</feature>
<feature type="compositionally biased region" description="Low complexity" evidence="6">
    <location>
        <begin position="47"/>
        <end position="58"/>
    </location>
</feature>
<feature type="sequence conflict" description="In Ref. 2; AAA50049." evidence="10" ref="2">
    <original>RV</original>
    <variation>LL</variation>
    <location>
        <begin position="381"/>
        <end position="382"/>
    </location>
</feature>
<protein>
    <recommendedName>
        <fullName>Retinoic acid receptor alpha-A</fullName>
        <shortName>RAR-alpha-A</shortName>
    </recommendedName>
    <alternativeName>
        <fullName>Nuclear receptor subfamily 1 group B member 1-A</fullName>
    </alternativeName>
    <alternativeName>
        <fullName>Retinoic acid receptor alpha</fullName>
        <shortName>zRAR alpha</shortName>
    </alternativeName>
    <alternativeName>
        <fullName>Retinoic acid receptor alpha-2.A</fullName>
        <shortName>RAR-alpha-2.A</shortName>
    </alternativeName>
</protein>
<organism>
    <name type="scientific">Danio rerio</name>
    <name type="common">Zebrafish</name>
    <name type="synonym">Brachydanio rerio</name>
    <dbReference type="NCBI Taxonomy" id="7955"/>
    <lineage>
        <taxon>Eukaryota</taxon>
        <taxon>Metazoa</taxon>
        <taxon>Chordata</taxon>
        <taxon>Craniata</taxon>
        <taxon>Vertebrata</taxon>
        <taxon>Euteleostomi</taxon>
        <taxon>Actinopterygii</taxon>
        <taxon>Neopterygii</taxon>
        <taxon>Teleostei</taxon>
        <taxon>Ostariophysi</taxon>
        <taxon>Cypriniformes</taxon>
        <taxon>Danionidae</taxon>
        <taxon>Danioninae</taxon>
        <taxon>Danio</taxon>
    </lineage>
</organism>
<comment type="function">
    <text evidence="1 8">Receptor for retinoic acid. Retinoic acid receptors bind as heterodimers to their target response elements in response to their ligands, all-trans or 9-cis retinoic acid, and regulate gene expression in various biological processes. The rar/rxr heterodimers bind to the retinoic acid response elements (RARE) composed of tandem 5'-AGGTCA-3' sites known as DR1-DR5 (By similarity). Required for hindbrain patterning.</text>
</comment>
<comment type="subunit">
    <text evidence="1">Heterodimer; with an rxr molecule. Binds DNA preferentially as a rar/rxr heterodimer.</text>
</comment>
<comment type="subcellular location">
    <subcellularLocation>
        <location evidence="4">Nucleus</location>
    </subcellularLocation>
</comment>
<comment type="tissue specificity">
    <text evidence="7 9">In the embryo, zygotic expression largely overlaps that of rarab, with high levels in hindbrain, lateral mesoderm and tail bud. In the adult, strong expression in brain and muscle, weaker expression in ovary, liver and digestive tract.</text>
</comment>
<comment type="developmental stage">
    <text evidence="7 8 9">Not expressed maternally. First detected at 8 hours post-fertilization (hpf) during gastrulation, with expression being restricted to the posterior epiblast. Expression then increases, reaching a peak at 24 hpf and decreasing from 30-48 hpf. At 9 hpf, expressed throughout the dorsal epiblast except at the dorsal midline, and ventrally in prospective tail and head regions. At 10-11 hpf, expressed in presumptive hindbrain, posterior neural plate, lateral mesoderm and tail bud. At 12 hpf, strongly expressed in the neural epithelium and tail bud and expressed at low levels elsewhere including the eye. At 24 hpf, restricted to the hindbrain with an anterior border at rhombomere 6-7, to anterior spinal cord and to head mesenchyme just posterior to the otic vesicle. At 48 hpf, hindbrain expression remains and there is diffuse expression in non-neural tissue in the pharyngeal region.</text>
</comment>
<comment type="induction">
    <text evidence="8 9">By retinoic acid in embryos.</text>
</comment>
<comment type="domain">
    <text>Composed of three domains: a modulating N-terminal domain, a DNA-binding domain and a C-terminal ligand-binding domain.</text>
</comment>
<comment type="domain">
    <text evidence="2">The 9aaTAD motif is a transactivation domain present in a large number of yeast and animal transcription factors.</text>
</comment>
<comment type="similarity">
    <text evidence="3">Belongs to the nuclear hormone receptor family. NR1 subfamily.</text>
</comment>
<keyword id="KW-0238">DNA-binding</keyword>
<keyword id="KW-0479">Metal-binding</keyword>
<keyword id="KW-0539">Nucleus</keyword>
<keyword id="KW-0675">Receptor</keyword>
<keyword id="KW-1185">Reference proteome</keyword>
<keyword id="KW-0804">Transcription</keyword>
<keyword id="KW-0805">Transcription regulation</keyword>
<keyword id="KW-0862">Zinc</keyword>
<keyword id="KW-0863">Zinc-finger</keyword>